<organism>
    <name type="scientific">Mus musculus</name>
    <name type="common">Mouse</name>
    <dbReference type="NCBI Taxonomy" id="10090"/>
    <lineage>
        <taxon>Eukaryota</taxon>
        <taxon>Metazoa</taxon>
        <taxon>Chordata</taxon>
        <taxon>Craniata</taxon>
        <taxon>Vertebrata</taxon>
        <taxon>Euteleostomi</taxon>
        <taxon>Mammalia</taxon>
        <taxon>Eutheria</taxon>
        <taxon>Euarchontoglires</taxon>
        <taxon>Glires</taxon>
        <taxon>Rodentia</taxon>
        <taxon>Myomorpha</taxon>
        <taxon>Muroidea</taxon>
        <taxon>Muridae</taxon>
        <taxon>Murinae</taxon>
        <taxon>Mus</taxon>
        <taxon>Mus</taxon>
    </lineage>
</organism>
<keyword id="KW-1003">Cell membrane</keyword>
<keyword id="KW-1015">Disulfide bond</keyword>
<keyword id="KW-0325">Glycoprotein</keyword>
<keyword id="KW-0406">Ion transport</keyword>
<keyword id="KW-0445">Lipid transport</keyword>
<keyword id="KW-0472">Membrane</keyword>
<keyword id="KW-1185">Reference proteome</keyword>
<keyword id="KW-0812">Transmembrane</keyword>
<keyword id="KW-1133">Transmembrane helix</keyword>
<keyword id="KW-0813">Transport</keyword>
<gene>
    <name type="primary">Slco1a5</name>
    <name type="synonym">Oatp1a5</name>
    <name type="synonym">Oatp3</name>
    <name type="synonym">Slc21a7</name>
</gene>
<name>SO1A5_MOUSE</name>
<reference key="1">
    <citation type="journal article" date="2000" name="Am. J. Physiol.">
        <title>Expression, transport properties, and chromosomal location of organic anion transporter subtype 3.</title>
        <authorList>
            <person name="Walters H.C."/>
            <person name="Craddock A.L."/>
            <person name="Fusegawa H."/>
            <person name="Willingham M.C."/>
            <person name="Dawson P.A."/>
        </authorList>
    </citation>
    <scope>NUCLEOTIDE SEQUENCE [MRNA]</scope>
    <source>
        <strain>BALB/cJ</strain>
        <tissue>Brain</tissue>
    </source>
</reference>
<reference key="2">
    <citation type="journal article" date="2004" name="Genome Res.">
        <title>The status, quality, and expansion of the NIH full-length cDNA project: the Mammalian Gene Collection (MGC).</title>
        <authorList>
            <consortium name="The MGC Project Team"/>
        </authorList>
    </citation>
    <scope>NUCLEOTIDE SEQUENCE [LARGE SCALE MRNA]</scope>
    <source>
        <tissue>Mammary tumor</tissue>
    </source>
</reference>
<reference key="3">
    <citation type="journal article" date="2004" name="J. Neurochem.">
        <title>Localization of organic anion transporting polypeptide 3 (oatp3) in mouse brain parenchymal and capillary endothelial cells.</title>
        <authorList>
            <person name="Ohtsuki S."/>
            <person name="Takizawa T."/>
            <person name="Takanaga H."/>
            <person name="Hori S."/>
            <person name="Hosoya K."/>
            <person name="Terasaki T."/>
        </authorList>
    </citation>
    <scope>TISSUE SPECIFICITY</scope>
</reference>
<protein>
    <recommendedName>
        <fullName>Solute carrier organic anion transporter family member 1A5</fullName>
    </recommendedName>
    <alternativeName>
        <fullName>Organic anion-transporting polypeptide 3</fullName>
        <shortName>OATP-3</shortName>
    </alternativeName>
    <alternativeName>
        <fullName>Sodium-independent organic anion transporter 3</fullName>
    </alternativeName>
    <alternativeName>
        <fullName>Solute carrier family 21 member 7</fullName>
    </alternativeName>
</protein>
<evidence type="ECO:0000250" key="1">
    <source>
        <dbReference type="UniProtKB" id="O88397"/>
    </source>
</evidence>
<evidence type="ECO:0000250" key="2">
    <source>
        <dbReference type="UniProtKB" id="P46721"/>
    </source>
</evidence>
<evidence type="ECO:0000255" key="3"/>
<evidence type="ECO:0000255" key="4">
    <source>
        <dbReference type="PROSITE-ProRule" id="PRU00798"/>
    </source>
</evidence>
<evidence type="ECO:0000269" key="5">
    <source>
    </source>
</evidence>
<evidence type="ECO:0000303" key="6">
    <source>
    </source>
</evidence>
<evidence type="ECO:0000305" key="7"/>
<comment type="function">
    <text evidence="1 2 6">Na(+)-independent transporter that mediates the cellular uptake of a broad range of organic anions such as the endogenous bile salts cholate and deoxycholate, either in their unconjugated or conjugated forms (taurocholate and glycocholate), estrone 3-sulfate and prostaglandin E2, at the plasma membrane. Responsible for intestinal absorption of bile acids. Capable of thyroid hormone transport (both T3 or 3,3',5'-triiodo-L-thyronine, and T4 or L-tyroxine) (By similarity). Plays roles in blood-brain and -cerebrospinal fluid barrier transport of organic anions and signal mediators, and in hormone uptake by neural cells (PubMed:15255953). May also play a role in the reuptake of neuropeptides such as substance P/TAC1 and vasoactive intestinal peptide/VIP released from retinal neurons (By similarity). Shows a pH-sensitive substrate specificity which may be ascribed to the protonation state of the binding site and leads to a stimulation of substrate transport in an acidic microenvironment. Hydrogencarbonate/HCO3(-) acts as the probable counteranion that exchanges for organic anions (By similarity). May contribute to regulate the transport of organic compounds in testis across the blood-testis-barrier (By similarity).</text>
</comment>
<comment type="catalytic activity">
    <reaction evidence="1">
        <text>taurocholate(out) = taurocholate(in)</text>
        <dbReference type="Rhea" id="RHEA:71703"/>
        <dbReference type="ChEBI" id="CHEBI:36257"/>
    </reaction>
</comment>
<comment type="catalytic activity">
    <reaction evidence="1">
        <text>glycocholate(out) = glycocholate(in)</text>
        <dbReference type="Rhea" id="RHEA:71851"/>
        <dbReference type="ChEBI" id="CHEBI:29746"/>
    </reaction>
</comment>
<comment type="catalytic activity">
    <reaction evidence="1">
        <text>taurochenodeoxycholate(out) = taurochenodeoxycholate(in)</text>
        <dbReference type="Rhea" id="RHEA:71855"/>
        <dbReference type="ChEBI" id="CHEBI:9407"/>
    </reaction>
</comment>
<comment type="catalytic activity">
    <reaction evidence="1">
        <text>tauroursodeoxycholate(out) = tauroursodeoxycholate(in)</text>
        <dbReference type="Rhea" id="RHEA:71843"/>
        <dbReference type="ChEBI" id="CHEBI:132028"/>
    </reaction>
</comment>
<comment type="catalytic activity">
    <reaction evidence="1">
        <text>3,3',5'-triiodo-L-thyronine(out) = 3,3',5'-triiodo-L-thyronine(in)</text>
        <dbReference type="Rhea" id="RHEA:71815"/>
        <dbReference type="ChEBI" id="CHEBI:57261"/>
    </reaction>
</comment>
<comment type="catalytic activity">
    <reaction evidence="1">
        <text>L-thyroxine(out) = L-thyroxine(in)</text>
        <dbReference type="Rhea" id="RHEA:71819"/>
        <dbReference type="ChEBI" id="CHEBI:58448"/>
    </reaction>
</comment>
<comment type="catalytic activity">
    <reaction evidence="1">
        <text>taurodeoxycholate(out) = taurodeoxycholate(in)</text>
        <dbReference type="Rhea" id="RHEA:71863"/>
        <dbReference type="ChEBI" id="CHEBI:36261"/>
    </reaction>
</comment>
<comment type="catalytic activity">
    <reaction evidence="1">
        <text>glycodeoxycholate(out) = glycodeoxycholate(in)</text>
        <dbReference type="Rhea" id="RHEA:71867"/>
        <dbReference type="ChEBI" id="CHEBI:82982"/>
    </reaction>
</comment>
<comment type="catalytic activity">
    <reaction evidence="1">
        <text>glycochenodeoxycholate(out) = glycochenodeoxycholate(in)</text>
        <dbReference type="Rhea" id="RHEA:71859"/>
        <dbReference type="ChEBI" id="CHEBI:36252"/>
    </reaction>
</comment>
<comment type="catalytic activity">
    <reaction evidence="1">
        <text>glycoursodeoxycholate(out) = glycoursodeoxycholate(in)</text>
        <dbReference type="Rhea" id="RHEA:71847"/>
        <dbReference type="ChEBI" id="CHEBI:132030"/>
    </reaction>
</comment>
<comment type="catalytic activity">
    <reaction evidence="1">
        <text>estrone 3-sulfate(out) = estrone 3-sulfate(in)</text>
        <dbReference type="Rhea" id="RHEA:71835"/>
        <dbReference type="ChEBI" id="CHEBI:60050"/>
    </reaction>
</comment>
<comment type="catalytic activity">
    <reaction evidence="1">
        <text>prostaglandin E2(out) = prostaglandin E2(in)</text>
        <dbReference type="Rhea" id="RHEA:50984"/>
        <dbReference type="ChEBI" id="CHEBI:606564"/>
    </reaction>
</comment>
<comment type="catalytic activity">
    <reaction evidence="2">
        <text>substance P(out) = substance P(in)</text>
        <dbReference type="Rhea" id="RHEA:74367"/>
        <dbReference type="ChEBI" id="CHEBI:190692"/>
    </reaction>
</comment>
<comment type="subcellular location">
    <subcellularLocation>
        <location evidence="2">Cell membrane</location>
        <topology evidence="7">Multi-pass membrane protein</topology>
    </subcellularLocation>
    <subcellularLocation>
        <location evidence="2">Basal cell membrane</location>
        <topology evidence="7">Multi-pass membrane protein</topology>
    </subcellularLocation>
</comment>
<comment type="tissue specificity">
    <text evidence="5">Expressed in brain, choroid plexus and lung, but not in liver or kidney.</text>
</comment>
<comment type="domain">
    <text evidence="1">A conserved histidine residue in the third TMD (His-107) may play an essential role in the pH sensitivity of SLCO1A5/OATP1A5-mediated substrate transport.</text>
</comment>
<comment type="similarity">
    <text evidence="7">Belongs to the organo anion transporter (TC 2.A.60) family.</text>
</comment>
<feature type="chain" id="PRO_0000191043" description="Solute carrier organic anion transporter family member 1A5">
    <location>
        <begin position="1"/>
        <end position="670"/>
    </location>
</feature>
<feature type="topological domain" description="Cytoplasmic" evidence="3">
    <location>
        <begin position="1"/>
        <end position="20"/>
    </location>
</feature>
<feature type="transmembrane region" description="Helical; Name=1" evidence="3">
    <location>
        <begin position="21"/>
        <end position="40"/>
    </location>
</feature>
<feature type="topological domain" description="Extracellular" evidence="3">
    <location>
        <begin position="41"/>
        <end position="59"/>
    </location>
</feature>
<feature type="transmembrane region" description="Helical; Name=2" evidence="3">
    <location>
        <begin position="60"/>
        <end position="80"/>
    </location>
</feature>
<feature type="topological domain" description="Cytoplasmic" evidence="3">
    <location>
        <begin position="81"/>
        <end position="86"/>
    </location>
</feature>
<feature type="transmembrane region" description="Helical; Name=3" evidence="3">
    <location>
        <begin position="87"/>
        <end position="111"/>
    </location>
</feature>
<feature type="topological domain" description="Extracellular" evidence="3">
    <location>
        <begin position="112"/>
        <end position="155"/>
    </location>
</feature>
<feature type="transmembrane region" description="Helical; Name=4" evidence="3">
    <location>
        <begin position="156"/>
        <end position="184"/>
    </location>
</feature>
<feature type="topological domain" description="Cytoplasmic" evidence="3">
    <location>
        <begin position="185"/>
        <end position="203"/>
    </location>
</feature>
<feature type="transmembrane region" description="Helical; Name=5" evidence="3">
    <location>
        <begin position="204"/>
        <end position="224"/>
    </location>
</feature>
<feature type="topological domain" description="Extracellular" evidence="3">
    <location>
        <begin position="225"/>
        <end position="242"/>
    </location>
</feature>
<feature type="transmembrane region" description="Helical; Name=6" evidence="3">
    <location>
        <begin position="243"/>
        <end position="267"/>
    </location>
</feature>
<feature type="topological domain" description="Cytoplasmic" evidence="3">
    <location>
        <begin position="268"/>
        <end position="311"/>
    </location>
</feature>
<feature type="transmembrane region" description="Helical; Name=7" evidence="3">
    <location>
        <begin position="312"/>
        <end position="333"/>
    </location>
</feature>
<feature type="topological domain" description="Extracellular" evidence="3">
    <location>
        <begin position="334"/>
        <end position="353"/>
    </location>
</feature>
<feature type="transmembrane region" description="Helical; Name=8" evidence="3">
    <location>
        <begin position="354"/>
        <end position="377"/>
    </location>
</feature>
<feature type="topological domain" description="Cytoplasmic" evidence="3">
    <location>
        <begin position="378"/>
        <end position="381"/>
    </location>
</feature>
<feature type="transmembrane region" description="Helical; Name=9" evidence="3">
    <location>
        <begin position="382"/>
        <end position="405"/>
    </location>
</feature>
<feature type="topological domain" description="Extracellular" evidence="3">
    <location>
        <begin position="406"/>
        <end position="513"/>
    </location>
</feature>
<feature type="transmembrane region" description="Helical; Name=10" evidence="3">
    <location>
        <begin position="514"/>
        <end position="536"/>
    </location>
</feature>
<feature type="topological domain" description="Cytoplasmic" evidence="3">
    <location>
        <begin position="537"/>
        <end position="545"/>
    </location>
</feature>
<feature type="transmembrane region" description="Helical; Name=11" evidence="3">
    <location>
        <begin position="546"/>
        <end position="571"/>
    </location>
</feature>
<feature type="topological domain" description="Extracellular" evidence="3">
    <location>
        <begin position="572"/>
        <end position="605"/>
    </location>
</feature>
<feature type="transmembrane region" description="Helical; Name=12" evidence="3">
    <location>
        <begin position="606"/>
        <end position="623"/>
    </location>
</feature>
<feature type="topological domain" description="Cytoplasmic" evidence="3">
    <location>
        <begin position="624"/>
        <end position="670"/>
    </location>
</feature>
<feature type="domain" description="Kazal-like" evidence="4">
    <location>
        <begin position="433"/>
        <end position="488"/>
    </location>
</feature>
<feature type="glycosylation site" description="N-linked (GlcNAc...) asparagine" evidence="3">
    <location>
        <position position="124"/>
    </location>
</feature>
<feature type="glycosylation site" description="N-linked (GlcNAc...) asparagine" evidence="3">
    <location>
        <position position="135"/>
    </location>
</feature>
<feature type="glycosylation site" description="N-linked (GlcNAc...) asparagine" evidence="3">
    <location>
        <position position="483"/>
    </location>
</feature>
<feature type="glycosylation site" description="N-linked (GlcNAc...) asparagine" evidence="3">
    <location>
        <position position="492"/>
    </location>
</feature>
<feature type="disulfide bond" evidence="4">
    <location>
        <begin position="439"/>
        <end position="469"/>
    </location>
</feature>
<feature type="disulfide bond" evidence="4">
    <location>
        <begin position="445"/>
        <end position="465"/>
    </location>
</feature>
<feature type="disulfide bond" evidence="4">
    <location>
        <begin position="454"/>
        <end position="486"/>
    </location>
</feature>
<feature type="sequence conflict" description="In Ref. 1; AAK39416." evidence="7" ref="1">
    <original>A</original>
    <variation>D</variation>
    <location>
        <position position="280"/>
    </location>
</feature>
<feature type="sequence conflict" description="In Ref. 1; AAK39416." evidence="7" ref="1">
    <original>I</original>
    <variation>M</variation>
    <location>
        <position position="591"/>
    </location>
</feature>
<feature type="sequence conflict" description="In Ref. 1; AAK39416." evidence="7" ref="1">
    <original>Q</original>
    <variation>L</variation>
    <location>
        <position position="644"/>
    </location>
</feature>
<feature type="sequence conflict" description="In Ref. 1; AAK39416." evidence="7" ref="1">
    <original>G</original>
    <variation>R</variation>
    <location>
        <position position="656"/>
    </location>
</feature>
<dbReference type="EMBL" id="AF240694">
    <property type="protein sequence ID" value="AAK39416.1"/>
    <property type="molecule type" value="mRNA"/>
</dbReference>
<dbReference type="EMBL" id="BC013594">
    <property type="protein sequence ID" value="AAH13594.1"/>
    <property type="molecule type" value="mRNA"/>
</dbReference>
<dbReference type="CCDS" id="CCDS57464.1"/>
<dbReference type="RefSeq" id="NP_001254636.1">
    <property type="nucleotide sequence ID" value="NM_001267707.1"/>
</dbReference>
<dbReference type="RefSeq" id="NP_570931.1">
    <property type="nucleotide sequence ID" value="NM_130861.3"/>
</dbReference>
<dbReference type="SMR" id="Q91YY5"/>
<dbReference type="FunCoup" id="Q91YY5">
    <property type="interactions" value="28"/>
</dbReference>
<dbReference type="STRING" id="10090.ENSMUSP00000137607"/>
<dbReference type="GlyCosmos" id="Q91YY5">
    <property type="glycosylation" value="4 sites, No reported glycans"/>
</dbReference>
<dbReference type="GlyGen" id="Q91YY5">
    <property type="glycosylation" value="4 sites"/>
</dbReference>
<dbReference type="iPTMnet" id="Q91YY5"/>
<dbReference type="PhosphoSitePlus" id="Q91YY5"/>
<dbReference type="SwissPalm" id="Q91YY5"/>
<dbReference type="jPOST" id="Q91YY5"/>
<dbReference type="PaxDb" id="10090-ENSMUSP00000080116"/>
<dbReference type="ProteomicsDB" id="261308"/>
<dbReference type="DNASU" id="108096"/>
<dbReference type="GeneID" id="108096"/>
<dbReference type="KEGG" id="mmu:108096"/>
<dbReference type="UCSC" id="uc009epa.2">
    <property type="organism name" value="mouse"/>
</dbReference>
<dbReference type="AGR" id="MGI:1351865"/>
<dbReference type="CTD" id="108096"/>
<dbReference type="MGI" id="MGI:1351865">
    <property type="gene designation" value="Slco1a5"/>
</dbReference>
<dbReference type="eggNOG" id="KOG3626">
    <property type="taxonomic scope" value="Eukaryota"/>
</dbReference>
<dbReference type="InParanoid" id="Q91YY5"/>
<dbReference type="OrthoDB" id="5062115at2759"/>
<dbReference type="PhylomeDB" id="Q91YY5"/>
<dbReference type="TreeFam" id="TF317540"/>
<dbReference type="BioGRID-ORCS" id="108096">
    <property type="hits" value="3 hits in 80 CRISPR screens"/>
</dbReference>
<dbReference type="ChiTaRS" id="Slco1a5">
    <property type="organism name" value="mouse"/>
</dbReference>
<dbReference type="PRO" id="PR:Q91YY5"/>
<dbReference type="Proteomes" id="UP000000589">
    <property type="component" value="Unplaced"/>
</dbReference>
<dbReference type="RNAct" id="Q91YY5">
    <property type="molecule type" value="protein"/>
</dbReference>
<dbReference type="GO" id="GO:0009925">
    <property type="term" value="C:basal plasma membrane"/>
    <property type="evidence" value="ECO:0000250"/>
    <property type="project" value="UniProtKB"/>
</dbReference>
<dbReference type="GO" id="GO:0005886">
    <property type="term" value="C:plasma membrane"/>
    <property type="evidence" value="ECO:0000250"/>
    <property type="project" value="UniProtKB"/>
</dbReference>
<dbReference type="GO" id="GO:0015125">
    <property type="term" value="F:bile acid transmembrane transporter activity"/>
    <property type="evidence" value="ECO:0000266"/>
    <property type="project" value="MGI"/>
</dbReference>
<dbReference type="GO" id="GO:0008514">
    <property type="term" value="F:organic anion transmembrane transporter activity"/>
    <property type="evidence" value="ECO:0000250"/>
    <property type="project" value="UniProtKB"/>
</dbReference>
<dbReference type="GO" id="GO:0022857">
    <property type="term" value="F:transmembrane transporter activity"/>
    <property type="evidence" value="ECO:0000250"/>
    <property type="project" value="UniProtKB"/>
</dbReference>
<dbReference type="GO" id="GO:0006811">
    <property type="term" value="P:monoatomic ion transport"/>
    <property type="evidence" value="ECO:0007669"/>
    <property type="project" value="UniProtKB-KW"/>
</dbReference>
<dbReference type="FunFam" id="1.20.1250.20:FF:000210">
    <property type="entry name" value="Solute carrier organic anion transporter family member"/>
    <property type="match status" value="1"/>
</dbReference>
<dbReference type="Gene3D" id="1.20.1250.20">
    <property type="entry name" value="MFS general substrate transporter like domains"/>
    <property type="match status" value="1"/>
</dbReference>
<dbReference type="InterPro" id="IPR002350">
    <property type="entry name" value="Kazal_dom"/>
</dbReference>
<dbReference type="InterPro" id="IPR036058">
    <property type="entry name" value="Kazal_dom_sf"/>
</dbReference>
<dbReference type="InterPro" id="IPR020846">
    <property type="entry name" value="MFS_dom"/>
</dbReference>
<dbReference type="InterPro" id="IPR036259">
    <property type="entry name" value="MFS_trans_sf"/>
</dbReference>
<dbReference type="InterPro" id="IPR004156">
    <property type="entry name" value="OATP"/>
</dbReference>
<dbReference type="NCBIfam" id="TIGR00805">
    <property type="entry name" value="oat"/>
    <property type="match status" value="1"/>
</dbReference>
<dbReference type="PANTHER" id="PTHR11388">
    <property type="entry name" value="ORGANIC ANION TRANSPORTER"/>
    <property type="match status" value="1"/>
</dbReference>
<dbReference type="PANTHER" id="PTHR11388:SF148">
    <property type="entry name" value="SOLUTE CARRIER ORGANIC ANION TRANSPORTER FAMILY MEMBER-RELATED"/>
    <property type="match status" value="1"/>
</dbReference>
<dbReference type="Pfam" id="PF07648">
    <property type="entry name" value="Kazal_2"/>
    <property type="match status" value="1"/>
</dbReference>
<dbReference type="Pfam" id="PF03137">
    <property type="entry name" value="OATP"/>
    <property type="match status" value="1"/>
</dbReference>
<dbReference type="SUPFAM" id="SSF100895">
    <property type="entry name" value="Kazal-type serine protease inhibitors"/>
    <property type="match status" value="1"/>
</dbReference>
<dbReference type="SUPFAM" id="SSF103473">
    <property type="entry name" value="MFS general substrate transporter"/>
    <property type="match status" value="1"/>
</dbReference>
<dbReference type="PROSITE" id="PS51465">
    <property type="entry name" value="KAZAL_2"/>
    <property type="match status" value="1"/>
</dbReference>
<dbReference type="PROSITE" id="PS50850">
    <property type="entry name" value="MFS"/>
    <property type="match status" value="1"/>
</dbReference>
<accession>Q91YY5</accession>
<accession>Q91XS2</accession>
<sequence>MGETEKRIATHGVRCFSKIKMFLLALTCAYVSKSLSGIYMNSMLTQIERQFDIPTSIVGLINGSFEIGNLLLIILVSYFGTKLHRPIMIGIGCVIMGLGCFLMSLPHFLMGRYEYETTISPTSNLSSNSFLCMENRTQTLKPTQDPAECVKEMKSLMWIYVLVGNIIRGIGETPIMPLGISYIEDFAKSENSPLYIGILESGKMIGPIVGLLLGSFCARIYVDTGSVNTDDLTITPTDTRWVGAWWIGFLVCAGVNILTSIPFFFFPKTLPKEGLQDNVARTENDKEEKHREKAKEENRGITKDFLPFMKSLSCNPIYMLLILTSVLQINAFINMFTFLPKYLEQQYGKSTSEVVLLIGVCNLPPICIGYLLIGFIMKKFRITVKKAAYMAFCLSLFEYLLSYFHFMISCDNFQVAGLTTSYEGVQHPLYVENKVLADCNTRCSCLTNTWDPVCGDNGLSYMSACLAGCEKSVGMGTHMVFQNCSCIQSSGNSSAVLGLCKKGPECANKLQYFLIMSVIGSFIYSITAIPGYMVLLRCIKSEEKSLGIGLHAFCTRIFAGIPAPIYFGALIDRTCLHWGTLKCGEPGACRIYNINNFRRIYLVLPAALRGSSYLPAFFILILMRKFQLPGEMYSSETELADMKQTVKKSECTDVHGIPKVENDGELKTKL</sequence>
<proteinExistence type="evidence at transcript level"/>